<proteinExistence type="inferred from homology"/>
<sequence length="223" mass="24776">MDLASLRAQQIELASSVCREDRLDKDPPAFIGGADVGFEQGGEVTRAAMVLLKYPSLELVEYKVARIATTMPYIPGFLSFREYPALLAAWEQLSQKPDLLFVDGHGISHPRRLGVASHFGLLVDVPTIGVAKKRLCGKFEPLSTEPGALSPLMDKGEQLAWVWRSKARCNPLFIATGHRVSTDSALAWVQRCMKGYRLPEPTRWADAVASGRPAFVRWQEIQR</sequence>
<evidence type="ECO:0000255" key="1">
    <source>
        <dbReference type="HAMAP-Rule" id="MF_00801"/>
    </source>
</evidence>
<gene>
    <name evidence="1" type="primary">nfi</name>
    <name type="ordered locus">SEN3954</name>
</gene>
<keyword id="KW-0963">Cytoplasm</keyword>
<keyword id="KW-0227">DNA damage</keyword>
<keyword id="KW-0234">DNA repair</keyword>
<keyword id="KW-0255">Endonuclease</keyword>
<keyword id="KW-0378">Hydrolase</keyword>
<keyword id="KW-0460">Magnesium</keyword>
<keyword id="KW-0479">Metal-binding</keyword>
<keyword id="KW-0540">Nuclease</keyword>
<comment type="function">
    <text evidence="1">DNA repair enzyme involved in the repair of deaminated bases. Selectively cleaves double-stranded DNA at the second phosphodiester bond 3' to a deoxyinosine leaving behind the intact lesion on the nicked DNA.</text>
</comment>
<comment type="catalytic activity">
    <reaction evidence="1">
        <text>Endonucleolytic cleavage at apurinic or apyrimidinic sites to products with a 5'-phosphate.</text>
        <dbReference type="EC" id="3.1.21.7"/>
    </reaction>
</comment>
<comment type="cofactor">
    <cofactor evidence="1">
        <name>Mg(2+)</name>
        <dbReference type="ChEBI" id="CHEBI:18420"/>
    </cofactor>
</comment>
<comment type="subcellular location">
    <subcellularLocation>
        <location evidence="1">Cytoplasm</location>
    </subcellularLocation>
</comment>
<comment type="similarity">
    <text evidence="1">Belongs to the endonuclease V family.</text>
</comment>
<protein>
    <recommendedName>
        <fullName evidence="1">Endonuclease V</fullName>
        <ecNumber evidence="1">3.1.21.7</ecNumber>
    </recommendedName>
    <alternativeName>
        <fullName evidence="1">Deoxyinosine 3'endonuclease</fullName>
    </alternativeName>
    <alternativeName>
        <fullName evidence="1">Deoxyribonuclease V</fullName>
        <shortName evidence="1">DNase V</shortName>
    </alternativeName>
</protein>
<name>NFI_SALEP</name>
<organism>
    <name type="scientific">Salmonella enteritidis PT4 (strain P125109)</name>
    <dbReference type="NCBI Taxonomy" id="550537"/>
    <lineage>
        <taxon>Bacteria</taxon>
        <taxon>Pseudomonadati</taxon>
        <taxon>Pseudomonadota</taxon>
        <taxon>Gammaproteobacteria</taxon>
        <taxon>Enterobacterales</taxon>
        <taxon>Enterobacteriaceae</taxon>
        <taxon>Salmonella</taxon>
    </lineage>
</organism>
<feature type="chain" id="PRO_1000191580" description="Endonuclease V">
    <location>
        <begin position="1"/>
        <end position="223"/>
    </location>
</feature>
<feature type="binding site" evidence="1">
    <location>
        <position position="35"/>
    </location>
    <ligand>
        <name>Mg(2+)</name>
        <dbReference type="ChEBI" id="CHEBI:18420"/>
    </ligand>
</feature>
<feature type="binding site" evidence="1">
    <location>
        <position position="103"/>
    </location>
    <ligand>
        <name>Mg(2+)</name>
        <dbReference type="ChEBI" id="CHEBI:18420"/>
    </ligand>
</feature>
<feature type="site" description="Interaction with target DNA" evidence="1">
    <location>
        <position position="73"/>
    </location>
</feature>
<accession>B5QYF3</accession>
<dbReference type="EC" id="3.1.21.7" evidence="1"/>
<dbReference type="EMBL" id="AM933172">
    <property type="protein sequence ID" value="CAR35523.1"/>
    <property type="molecule type" value="Genomic_DNA"/>
</dbReference>
<dbReference type="RefSeq" id="WP_000362363.1">
    <property type="nucleotide sequence ID" value="NC_011294.1"/>
</dbReference>
<dbReference type="SMR" id="B5QYF3"/>
<dbReference type="KEGG" id="set:SEN3954"/>
<dbReference type="HOGENOM" id="CLU_047631_1_0_6"/>
<dbReference type="Proteomes" id="UP000000613">
    <property type="component" value="Chromosome"/>
</dbReference>
<dbReference type="GO" id="GO:0005737">
    <property type="term" value="C:cytoplasm"/>
    <property type="evidence" value="ECO:0007669"/>
    <property type="project" value="UniProtKB-SubCell"/>
</dbReference>
<dbReference type="GO" id="GO:0043737">
    <property type="term" value="F:deoxyribonuclease V activity"/>
    <property type="evidence" value="ECO:0007669"/>
    <property type="project" value="UniProtKB-UniRule"/>
</dbReference>
<dbReference type="GO" id="GO:0000287">
    <property type="term" value="F:magnesium ion binding"/>
    <property type="evidence" value="ECO:0007669"/>
    <property type="project" value="UniProtKB-UniRule"/>
</dbReference>
<dbReference type="GO" id="GO:0016891">
    <property type="term" value="F:RNA endonuclease activity, producing 5'-phosphomonoesters"/>
    <property type="evidence" value="ECO:0007669"/>
    <property type="project" value="TreeGrafter"/>
</dbReference>
<dbReference type="GO" id="GO:0003727">
    <property type="term" value="F:single-stranded RNA binding"/>
    <property type="evidence" value="ECO:0007669"/>
    <property type="project" value="TreeGrafter"/>
</dbReference>
<dbReference type="GO" id="GO:0006281">
    <property type="term" value="P:DNA repair"/>
    <property type="evidence" value="ECO:0007669"/>
    <property type="project" value="UniProtKB-UniRule"/>
</dbReference>
<dbReference type="CDD" id="cd06559">
    <property type="entry name" value="Endonuclease_V"/>
    <property type="match status" value="1"/>
</dbReference>
<dbReference type="FunFam" id="3.30.2170.10:FF:000001">
    <property type="entry name" value="Endonuclease V"/>
    <property type="match status" value="1"/>
</dbReference>
<dbReference type="Gene3D" id="3.30.2170.10">
    <property type="entry name" value="archaeoglobus fulgidus dsm 4304 superfamily"/>
    <property type="match status" value="1"/>
</dbReference>
<dbReference type="HAMAP" id="MF_00801">
    <property type="entry name" value="Endonuclease_5"/>
    <property type="match status" value="1"/>
</dbReference>
<dbReference type="InterPro" id="IPR007581">
    <property type="entry name" value="Endonuclease-V"/>
</dbReference>
<dbReference type="NCBIfam" id="NF008629">
    <property type="entry name" value="PRK11617.1"/>
    <property type="match status" value="1"/>
</dbReference>
<dbReference type="PANTHER" id="PTHR28511">
    <property type="entry name" value="ENDONUCLEASE V"/>
    <property type="match status" value="1"/>
</dbReference>
<dbReference type="PANTHER" id="PTHR28511:SF1">
    <property type="entry name" value="ENDONUCLEASE V"/>
    <property type="match status" value="1"/>
</dbReference>
<dbReference type="Pfam" id="PF04493">
    <property type="entry name" value="Endonuclease_5"/>
    <property type="match status" value="1"/>
</dbReference>
<reference key="1">
    <citation type="journal article" date="2008" name="Genome Res.">
        <title>Comparative genome analysis of Salmonella enteritidis PT4 and Salmonella gallinarum 287/91 provides insights into evolutionary and host adaptation pathways.</title>
        <authorList>
            <person name="Thomson N.R."/>
            <person name="Clayton D.J."/>
            <person name="Windhorst D."/>
            <person name="Vernikos G."/>
            <person name="Davidson S."/>
            <person name="Churcher C."/>
            <person name="Quail M.A."/>
            <person name="Stevens M."/>
            <person name="Jones M.A."/>
            <person name="Watson M."/>
            <person name="Barron A."/>
            <person name="Layton A."/>
            <person name="Pickard D."/>
            <person name="Kingsley R.A."/>
            <person name="Bignell A."/>
            <person name="Clark L."/>
            <person name="Harris B."/>
            <person name="Ormond D."/>
            <person name="Abdellah Z."/>
            <person name="Brooks K."/>
            <person name="Cherevach I."/>
            <person name="Chillingworth T."/>
            <person name="Woodward J."/>
            <person name="Norberczak H."/>
            <person name="Lord A."/>
            <person name="Arrowsmith C."/>
            <person name="Jagels K."/>
            <person name="Moule S."/>
            <person name="Mungall K."/>
            <person name="Saunders M."/>
            <person name="Whitehead S."/>
            <person name="Chabalgoity J.A."/>
            <person name="Maskell D."/>
            <person name="Humphreys T."/>
            <person name="Roberts M."/>
            <person name="Barrow P.A."/>
            <person name="Dougan G."/>
            <person name="Parkhill J."/>
        </authorList>
    </citation>
    <scope>NUCLEOTIDE SEQUENCE [LARGE SCALE GENOMIC DNA]</scope>
    <source>
        <strain>P125109</strain>
    </source>
</reference>